<keyword id="KW-0119">Carbohydrate metabolism</keyword>
<keyword id="KW-0313">Glucose metabolism</keyword>
<keyword id="KW-0378">Hydrolase</keyword>
<sequence>MKQTVYTASPESQQIHVWSLNHEGTLTLVQVVDVPGQVQPMVVSPDKRYLYVGVRPEFRVLAYRIAPDDGVLTFAAESALPGSPTHISTDHHGRFVFVGSYNAGNVSVTRLQDGLPVELVDVVEGLDGCHSANITPDNRTLWVPALKQDRICLFTLSDDGHLVAQEPAEVNTVEGAGPRHMVFHPNRQYAYCVNELNSSVDVWQLKNPHGEIECVQTLDMMPADFSDTRWAADIHITPDGRHLYACDRTASLITVFSVSEDGSVLSVEGFQPTEVQPRGFNIDNSGKYLIAAGQKSHHIAVYEITGTQGLLTEKGRYAVGQGPMWVVVNAY</sequence>
<accession>C0PWX3</accession>
<organism>
    <name type="scientific">Salmonella paratyphi C (strain RKS4594)</name>
    <dbReference type="NCBI Taxonomy" id="476213"/>
    <lineage>
        <taxon>Bacteria</taxon>
        <taxon>Pseudomonadati</taxon>
        <taxon>Pseudomonadota</taxon>
        <taxon>Gammaproteobacteria</taxon>
        <taxon>Enterobacterales</taxon>
        <taxon>Enterobacteriaceae</taxon>
        <taxon>Salmonella</taxon>
    </lineage>
</organism>
<dbReference type="EC" id="3.1.1.31" evidence="1"/>
<dbReference type="EMBL" id="CP000857">
    <property type="protein sequence ID" value="ACN44955.1"/>
    <property type="molecule type" value="Genomic_DNA"/>
</dbReference>
<dbReference type="RefSeq" id="WP_000815475.1">
    <property type="nucleotide sequence ID" value="NC_012125.1"/>
</dbReference>
<dbReference type="SMR" id="C0PWX3"/>
<dbReference type="KEGG" id="sei:SPC_0781"/>
<dbReference type="HOGENOM" id="CLU_038716_2_0_6"/>
<dbReference type="UniPathway" id="UPA00115">
    <property type="reaction ID" value="UER00409"/>
</dbReference>
<dbReference type="Proteomes" id="UP000001599">
    <property type="component" value="Chromosome"/>
</dbReference>
<dbReference type="GO" id="GO:0005829">
    <property type="term" value="C:cytosol"/>
    <property type="evidence" value="ECO:0007669"/>
    <property type="project" value="TreeGrafter"/>
</dbReference>
<dbReference type="GO" id="GO:0017057">
    <property type="term" value="F:6-phosphogluconolactonase activity"/>
    <property type="evidence" value="ECO:0007669"/>
    <property type="project" value="UniProtKB-UniRule"/>
</dbReference>
<dbReference type="GO" id="GO:0006006">
    <property type="term" value="P:glucose metabolic process"/>
    <property type="evidence" value="ECO:0007669"/>
    <property type="project" value="UniProtKB-KW"/>
</dbReference>
<dbReference type="GO" id="GO:0009051">
    <property type="term" value="P:pentose-phosphate shunt, oxidative branch"/>
    <property type="evidence" value="ECO:0007669"/>
    <property type="project" value="UniProtKB-UniRule"/>
</dbReference>
<dbReference type="FunFam" id="2.130.10.10:FF:000051">
    <property type="entry name" value="6-phosphogluconolactonase"/>
    <property type="match status" value="1"/>
</dbReference>
<dbReference type="Gene3D" id="2.130.10.10">
    <property type="entry name" value="YVTN repeat-like/Quinoprotein amine dehydrogenase"/>
    <property type="match status" value="1"/>
</dbReference>
<dbReference type="HAMAP" id="MF_01605">
    <property type="entry name" value="6P_gluconolactonase"/>
    <property type="match status" value="1"/>
</dbReference>
<dbReference type="InterPro" id="IPR022528">
    <property type="entry name" value="6-phosphogluconolactonase_YbhE"/>
</dbReference>
<dbReference type="InterPro" id="IPR050282">
    <property type="entry name" value="Cycloisomerase_2"/>
</dbReference>
<dbReference type="InterPro" id="IPR019405">
    <property type="entry name" value="Lactonase_7-beta_prop"/>
</dbReference>
<dbReference type="InterPro" id="IPR011045">
    <property type="entry name" value="N2O_reductase_N"/>
</dbReference>
<dbReference type="InterPro" id="IPR015943">
    <property type="entry name" value="WD40/YVTN_repeat-like_dom_sf"/>
</dbReference>
<dbReference type="NCBIfam" id="NF008258">
    <property type="entry name" value="PRK11028.1"/>
    <property type="match status" value="1"/>
</dbReference>
<dbReference type="PANTHER" id="PTHR30344:SF1">
    <property type="entry name" value="6-PHOSPHOGLUCONOLACTONASE"/>
    <property type="match status" value="1"/>
</dbReference>
<dbReference type="PANTHER" id="PTHR30344">
    <property type="entry name" value="6-PHOSPHOGLUCONOLACTONASE-RELATED"/>
    <property type="match status" value="1"/>
</dbReference>
<dbReference type="Pfam" id="PF10282">
    <property type="entry name" value="Lactonase"/>
    <property type="match status" value="1"/>
</dbReference>
<dbReference type="SUPFAM" id="SSF50974">
    <property type="entry name" value="Nitrous oxide reductase, N-terminal domain"/>
    <property type="match status" value="2"/>
</dbReference>
<name>6PGL_SALPC</name>
<feature type="chain" id="PRO_1000185838" description="6-phosphogluconolactonase">
    <location>
        <begin position="1"/>
        <end position="331"/>
    </location>
</feature>
<reference key="1">
    <citation type="journal article" date="2009" name="PLoS ONE">
        <title>Salmonella paratyphi C: genetic divergence from Salmonella choleraesuis and pathogenic convergence with Salmonella typhi.</title>
        <authorList>
            <person name="Liu W.-Q."/>
            <person name="Feng Y."/>
            <person name="Wang Y."/>
            <person name="Zou Q.-H."/>
            <person name="Chen F."/>
            <person name="Guo J.-T."/>
            <person name="Peng Y.-H."/>
            <person name="Jin Y."/>
            <person name="Li Y.-G."/>
            <person name="Hu S.-N."/>
            <person name="Johnston R.N."/>
            <person name="Liu G.-R."/>
            <person name="Liu S.-L."/>
        </authorList>
    </citation>
    <scope>NUCLEOTIDE SEQUENCE [LARGE SCALE GENOMIC DNA]</scope>
    <source>
        <strain>RKS4594</strain>
    </source>
</reference>
<protein>
    <recommendedName>
        <fullName evidence="1">6-phosphogluconolactonase</fullName>
        <shortName evidence="1">6-P-gluconolactonase</shortName>
        <ecNumber evidence="1">3.1.1.31</ecNumber>
    </recommendedName>
</protein>
<proteinExistence type="inferred from homology"/>
<comment type="function">
    <text evidence="1">Catalyzes the hydrolysis of 6-phosphogluconolactone to 6-phosphogluconate.</text>
</comment>
<comment type="catalytic activity">
    <reaction evidence="1">
        <text>6-phospho-D-glucono-1,5-lactone + H2O = 6-phospho-D-gluconate + H(+)</text>
        <dbReference type="Rhea" id="RHEA:12556"/>
        <dbReference type="ChEBI" id="CHEBI:15377"/>
        <dbReference type="ChEBI" id="CHEBI:15378"/>
        <dbReference type="ChEBI" id="CHEBI:57955"/>
        <dbReference type="ChEBI" id="CHEBI:58759"/>
        <dbReference type="EC" id="3.1.1.31"/>
    </reaction>
</comment>
<comment type="pathway">
    <text evidence="1">Carbohydrate degradation; pentose phosphate pathway; D-ribulose 5-phosphate from D-glucose 6-phosphate (oxidative stage): step 2/3.</text>
</comment>
<comment type="similarity">
    <text evidence="1">Belongs to the cycloisomerase 2 family.</text>
</comment>
<gene>
    <name evidence="1" type="primary">pgl</name>
    <name type="ordered locus">SPC_0781</name>
</gene>
<evidence type="ECO:0000255" key="1">
    <source>
        <dbReference type="HAMAP-Rule" id="MF_01605"/>
    </source>
</evidence>